<evidence type="ECO:0000250" key="1"/>
<evidence type="ECO:0000250" key="2">
    <source>
        <dbReference type="UniProtKB" id="P05407"/>
    </source>
</evidence>
<evidence type="ECO:0000255" key="3">
    <source>
        <dbReference type="PROSITE-ProRule" id="PRU00193"/>
    </source>
</evidence>
<proteinExistence type="predicted"/>
<keyword id="KW-0010">Activator</keyword>
<keyword id="KW-0067">ATP-binding</keyword>
<keyword id="KW-0238">DNA-binding</keyword>
<keyword id="KW-0479">Metal-binding</keyword>
<keyword id="KW-0535">Nitrogen fixation</keyword>
<keyword id="KW-0547">Nucleotide-binding</keyword>
<keyword id="KW-0614">Plasmid</keyword>
<keyword id="KW-0804">Transcription</keyword>
<keyword id="KW-0805">Transcription regulation</keyword>
<keyword id="KW-0902">Two-component regulatory system</keyword>
<organism>
    <name type="scientific">Rhizobium leguminosarum</name>
    <dbReference type="NCBI Taxonomy" id="384"/>
    <lineage>
        <taxon>Bacteria</taxon>
        <taxon>Pseudomonadati</taxon>
        <taxon>Pseudomonadota</taxon>
        <taxon>Alphaproteobacteria</taxon>
        <taxon>Hyphomicrobiales</taxon>
        <taxon>Rhizobiaceae</taxon>
        <taxon>Rhizobium/Agrobacterium group</taxon>
        <taxon>Rhizobium</taxon>
    </lineage>
</organism>
<accession>P09828</accession>
<protein>
    <recommendedName>
        <fullName>Nif-specific regulatory protein</fullName>
    </recommendedName>
</protein>
<dbReference type="EMBL" id="X05049">
    <property type="protein sequence ID" value="CAA28723.1"/>
    <property type="molecule type" value="Genomic_DNA"/>
</dbReference>
<dbReference type="PIR" id="C25878">
    <property type="entry name" value="C25878"/>
</dbReference>
<dbReference type="SMR" id="P09828"/>
<dbReference type="GO" id="GO:0005524">
    <property type="term" value="F:ATP binding"/>
    <property type="evidence" value="ECO:0007669"/>
    <property type="project" value="UniProtKB-KW"/>
</dbReference>
<dbReference type="GO" id="GO:0016887">
    <property type="term" value="F:ATP hydrolysis activity"/>
    <property type="evidence" value="ECO:0007669"/>
    <property type="project" value="InterPro"/>
</dbReference>
<dbReference type="GO" id="GO:0003700">
    <property type="term" value="F:DNA-binding transcription factor activity"/>
    <property type="evidence" value="ECO:0007669"/>
    <property type="project" value="InterPro"/>
</dbReference>
<dbReference type="GO" id="GO:0046872">
    <property type="term" value="F:metal ion binding"/>
    <property type="evidence" value="ECO:0007669"/>
    <property type="project" value="UniProtKB-KW"/>
</dbReference>
<dbReference type="GO" id="GO:0043565">
    <property type="term" value="F:sequence-specific DNA binding"/>
    <property type="evidence" value="ECO:0007669"/>
    <property type="project" value="InterPro"/>
</dbReference>
<dbReference type="GO" id="GO:0009399">
    <property type="term" value="P:nitrogen fixation"/>
    <property type="evidence" value="ECO:0007669"/>
    <property type="project" value="UniProtKB-KW"/>
</dbReference>
<dbReference type="GO" id="GO:0000160">
    <property type="term" value="P:phosphorelay signal transduction system"/>
    <property type="evidence" value="ECO:0007669"/>
    <property type="project" value="UniProtKB-KW"/>
</dbReference>
<dbReference type="CDD" id="cd00009">
    <property type="entry name" value="AAA"/>
    <property type="match status" value="1"/>
</dbReference>
<dbReference type="FunFam" id="3.40.50.300:FF:000006">
    <property type="entry name" value="DNA-binding transcriptional regulator NtrC"/>
    <property type="match status" value="1"/>
</dbReference>
<dbReference type="Gene3D" id="1.10.8.60">
    <property type="match status" value="1"/>
</dbReference>
<dbReference type="Gene3D" id="3.30.450.40">
    <property type="match status" value="1"/>
</dbReference>
<dbReference type="Gene3D" id="1.10.10.60">
    <property type="entry name" value="Homeodomain-like"/>
    <property type="match status" value="1"/>
</dbReference>
<dbReference type="Gene3D" id="3.40.50.300">
    <property type="entry name" value="P-loop containing nucleotide triphosphate hydrolases"/>
    <property type="match status" value="1"/>
</dbReference>
<dbReference type="InterPro" id="IPR003593">
    <property type="entry name" value="AAA+_ATPase"/>
</dbReference>
<dbReference type="InterPro" id="IPR029016">
    <property type="entry name" value="GAF-like_dom_sf"/>
</dbReference>
<dbReference type="InterPro" id="IPR002197">
    <property type="entry name" value="HTH_Fis"/>
</dbReference>
<dbReference type="InterPro" id="IPR010113">
    <property type="entry name" value="Nif-specific_regulatory_prot"/>
</dbReference>
<dbReference type="InterPro" id="IPR027417">
    <property type="entry name" value="P-loop_NTPase"/>
</dbReference>
<dbReference type="InterPro" id="IPR002078">
    <property type="entry name" value="Sigma_54_int"/>
</dbReference>
<dbReference type="InterPro" id="IPR025662">
    <property type="entry name" value="Sigma_54_int_dom_ATP-bd_1"/>
</dbReference>
<dbReference type="InterPro" id="IPR025943">
    <property type="entry name" value="Sigma_54_int_dom_ATP-bd_2"/>
</dbReference>
<dbReference type="InterPro" id="IPR025944">
    <property type="entry name" value="Sigma_54_int_dom_CS"/>
</dbReference>
<dbReference type="NCBIfam" id="TIGR01817">
    <property type="entry name" value="nifA"/>
    <property type="match status" value="1"/>
</dbReference>
<dbReference type="PANTHER" id="PTHR32071:SF117">
    <property type="entry name" value="PTS-DEPENDENT DIHYDROXYACETONE KINASE OPERON REGULATORY PROTEIN-RELATED"/>
    <property type="match status" value="1"/>
</dbReference>
<dbReference type="PANTHER" id="PTHR32071">
    <property type="entry name" value="TRANSCRIPTIONAL REGULATORY PROTEIN"/>
    <property type="match status" value="1"/>
</dbReference>
<dbReference type="Pfam" id="PF02954">
    <property type="entry name" value="HTH_8"/>
    <property type="match status" value="1"/>
</dbReference>
<dbReference type="Pfam" id="PF00158">
    <property type="entry name" value="Sigma54_activat"/>
    <property type="match status" value="1"/>
</dbReference>
<dbReference type="PRINTS" id="PR01590">
    <property type="entry name" value="HTHFIS"/>
</dbReference>
<dbReference type="SMART" id="SM00382">
    <property type="entry name" value="AAA"/>
    <property type="match status" value="1"/>
</dbReference>
<dbReference type="SUPFAM" id="SSF55781">
    <property type="entry name" value="GAF domain-like"/>
    <property type="match status" value="1"/>
</dbReference>
<dbReference type="SUPFAM" id="SSF52540">
    <property type="entry name" value="P-loop containing nucleoside triphosphate hydrolases"/>
    <property type="match status" value="1"/>
</dbReference>
<dbReference type="PROSITE" id="PS00675">
    <property type="entry name" value="SIGMA54_INTERACT_1"/>
    <property type="match status" value="1"/>
</dbReference>
<dbReference type="PROSITE" id="PS00676">
    <property type="entry name" value="SIGMA54_INTERACT_2"/>
    <property type="match status" value="1"/>
</dbReference>
<dbReference type="PROSITE" id="PS00688">
    <property type="entry name" value="SIGMA54_INTERACT_3"/>
    <property type="match status" value="1"/>
</dbReference>
<dbReference type="PROSITE" id="PS50045">
    <property type="entry name" value="SIGMA54_INTERACT_4"/>
    <property type="match status" value="1"/>
</dbReference>
<comment type="function">
    <text>Required for activation of most nif operons, which are directly involved in nitrogen fixation.</text>
</comment>
<comment type="subunit">
    <text>Interacts with sigma-54.</text>
</comment>
<feature type="chain" id="PRO_0000081311" description="Nif-specific regulatory protein">
    <location>
        <begin position="1"/>
        <end position="519"/>
    </location>
</feature>
<feature type="domain" description="Sigma-54 factor interaction" evidence="3">
    <location>
        <begin position="177"/>
        <end position="405"/>
    </location>
</feature>
<feature type="DNA-binding region" description="H-T-H motif" evidence="1">
    <location>
        <begin position="491"/>
        <end position="510"/>
    </location>
</feature>
<feature type="region of interest" description="Inter-domain linker">
    <location>
        <begin position="406"/>
        <end position="476"/>
    </location>
</feature>
<feature type="region of interest" description="C-terminal DNA-binding domain">
    <location>
        <begin position="477"/>
        <end position="519"/>
    </location>
</feature>
<feature type="binding site" evidence="3">
    <location>
        <begin position="205"/>
        <end position="212"/>
    </location>
    <ligand>
        <name>ATP</name>
        <dbReference type="ChEBI" id="CHEBI:30616"/>
    </ligand>
</feature>
<feature type="binding site" evidence="3">
    <location>
        <begin position="268"/>
        <end position="277"/>
    </location>
    <ligand>
        <name>ATP</name>
        <dbReference type="ChEBI" id="CHEBI:30616"/>
    </ligand>
</feature>
<feature type="binding site" evidence="2">
    <location>
        <position position="419"/>
    </location>
    <ligand>
        <name>a divalent metal cation</name>
        <dbReference type="ChEBI" id="CHEBI:60240"/>
    </ligand>
</feature>
<feature type="binding site" evidence="2">
    <location>
        <position position="424"/>
    </location>
    <ligand>
        <name>a divalent metal cation</name>
        <dbReference type="ChEBI" id="CHEBI:60240"/>
    </ligand>
</feature>
<sequence length="519" mass="56180">MIKPEARLHILYDISKELISSFPLDNLLKAAMNALVEHLRLRDGGIVIHGSGGEPWINVRAPIGDDVRSRSLTIEQADAINRVIASGEKHFGKNSVVLPVKVNRKAIGALWIDFAQKSGAQDESLLAMIAVLIGLTCQRDRELCSDGGSVAEEQQAGQIPKIKPKPHPTQLDKIDWIVGESPALKRVLATTKIVAATNSAVLLRGESGTGKECFARAIHALSIRKSKAFIKLNCAALSETVLESELFGHEKGAFTGALLQRAGRFELANGGTLLLDEIGDVSPQFQAKLLRVLQEGEFERLGGTKTLKVDVRVICATNKNLEVAVLRGEFRADLYYRINVVPIILPPLRQRDGDISLLAQVFLEQFNNANDRNCDFGPSAIDILSKCAFPGNVRELDNCVQRTATLASSNTITSSDFACQQDQCSSALLRKADGDGIGNDAMNGLNSRDTMSGGLCAHAGTPSGAAATIEAAGLTERDRLIKAMERAGWVQAKAARILGKTPRQVGYALRRHRIDVKKE</sequence>
<gene>
    <name type="primary">nifA</name>
</gene>
<reference key="1">
    <citation type="journal article" date="1987" name="Nucleic Acids Res.">
        <title>Organization and partial sequence of a DNA region of the Rhizobium leguminosarum symbiotic plasmid pRL6JI containing the genes fixABC, nifA, nifB and a novel open reading frame.</title>
        <authorList>
            <person name="Groenger P."/>
            <person name="Manian S.S."/>
            <person name="Reilaender H."/>
            <person name="O'Connell M."/>
            <person name="Priefer U.B."/>
            <person name="Puehler A."/>
        </authorList>
    </citation>
    <scope>NUCLEOTIDE SEQUENCE [GENOMIC DNA]</scope>
</reference>
<geneLocation type="plasmid">
    <name>sym pRL6JI</name>
</geneLocation>
<name>NIFA_RHILE</name>